<reference key="1">
    <citation type="journal article" date="2005" name="J. Bacteriol.">
        <title>Whole-genome sequencing of Staphylococcus haemolyticus uncovers the extreme plasticity of its genome and the evolution of human-colonizing staphylococcal species.</title>
        <authorList>
            <person name="Takeuchi F."/>
            <person name="Watanabe S."/>
            <person name="Baba T."/>
            <person name="Yuzawa H."/>
            <person name="Ito T."/>
            <person name="Morimoto Y."/>
            <person name="Kuroda M."/>
            <person name="Cui L."/>
            <person name="Takahashi M."/>
            <person name="Ankai A."/>
            <person name="Baba S."/>
            <person name="Fukui S."/>
            <person name="Lee J.C."/>
            <person name="Hiramatsu K."/>
        </authorList>
    </citation>
    <scope>NUCLEOTIDE SEQUENCE [LARGE SCALE GENOMIC DNA]</scope>
    <source>
        <strain>JCSC1435</strain>
    </source>
</reference>
<proteinExistence type="inferred from homology"/>
<organism>
    <name type="scientific">Staphylococcus haemolyticus (strain JCSC1435)</name>
    <dbReference type="NCBI Taxonomy" id="279808"/>
    <lineage>
        <taxon>Bacteria</taxon>
        <taxon>Bacillati</taxon>
        <taxon>Bacillota</taxon>
        <taxon>Bacilli</taxon>
        <taxon>Bacillales</taxon>
        <taxon>Staphylococcaceae</taxon>
        <taxon>Staphylococcus</taxon>
    </lineage>
</organism>
<comment type="function">
    <text evidence="1">With S4 and S12 plays an important role in translational accuracy.</text>
</comment>
<comment type="function">
    <text evidence="1">Located at the back of the 30S subunit body where it stabilizes the conformation of the head with respect to the body.</text>
</comment>
<comment type="subunit">
    <text evidence="1">Part of the 30S ribosomal subunit. Contacts proteins S4 and S8.</text>
</comment>
<comment type="domain">
    <text>The N-terminal domain interacts with the head of the 30S subunit; the C-terminal domain interacts with the body and contacts protein S4. The interaction surface between S4 and S5 is involved in control of translational fidelity.</text>
</comment>
<comment type="similarity">
    <text evidence="1">Belongs to the universal ribosomal protein uS5 family.</text>
</comment>
<accession>Q4L897</accession>
<keyword id="KW-0687">Ribonucleoprotein</keyword>
<keyword id="KW-0689">Ribosomal protein</keyword>
<keyword id="KW-0694">RNA-binding</keyword>
<keyword id="KW-0699">rRNA-binding</keyword>
<evidence type="ECO:0000255" key="1">
    <source>
        <dbReference type="HAMAP-Rule" id="MF_01307"/>
    </source>
</evidence>
<evidence type="ECO:0000305" key="2"/>
<protein>
    <recommendedName>
        <fullName evidence="1">Small ribosomal subunit protein uS5</fullName>
    </recommendedName>
    <alternativeName>
        <fullName evidence="2">30S ribosomal protein S5</fullName>
    </alternativeName>
</protein>
<sequence>MARREEETKEFEERVVTINRVAKVVKGGRRFRFTALVVVGDKNGRVGFGTGKAQEVPEAIKKAVEAAKKDLVVVPRVEGTTPHTITGRYGSGSVFMKPAAPGTGVIAGGPVRAVLELAGITDILSKSLGSNTPINMVRATINGLQNLKNAEDVAKLRGKSVEELYN</sequence>
<name>RS5_STAHJ</name>
<dbReference type="EMBL" id="AP006716">
    <property type="protein sequence ID" value="BAE04128.1"/>
    <property type="molecule type" value="Genomic_DNA"/>
</dbReference>
<dbReference type="RefSeq" id="WP_011275137.1">
    <property type="nucleotide sequence ID" value="NC_007168.1"/>
</dbReference>
<dbReference type="SMR" id="Q4L897"/>
<dbReference type="GeneID" id="93780208"/>
<dbReference type="KEGG" id="sha:SH0819"/>
<dbReference type="eggNOG" id="COG0098">
    <property type="taxonomic scope" value="Bacteria"/>
</dbReference>
<dbReference type="HOGENOM" id="CLU_065898_2_2_9"/>
<dbReference type="OrthoDB" id="9809045at2"/>
<dbReference type="Proteomes" id="UP000000543">
    <property type="component" value="Chromosome"/>
</dbReference>
<dbReference type="GO" id="GO:0015935">
    <property type="term" value="C:small ribosomal subunit"/>
    <property type="evidence" value="ECO:0007669"/>
    <property type="project" value="InterPro"/>
</dbReference>
<dbReference type="GO" id="GO:0019843">
    <property type="term" value="F:rRNA binding"/>
    <property type="evidence" value="ECO:0007669"/>
    <property type="project" value="UniProtKB-UniRule"/>
</dbReference>
<dbReference type="GO" id="GO:0003735">
    <property type="term" value="F:structural constituent of ribosome"/>
    <property type="evidence" value="ECO:0007669"/>
    <property type="project" value="InterPro"/>
</dbReference>
<dbReference type="GO" id="GO:0006412">
    <property type="term" value="P:translation"/>
    <property type="evidence" value="ECO:0007669"/>
    <property type="project" value="UniProtKB-UniRule"/>
</dbReference>
<dbReference type="FunFam" id="3.30.160.20:FF:000001">
    <property type="entry name" value="30S ribosomal protein S5"/>
    <property type="match status" value="1"/>
</dbReference>
<dbReference type="FunFam" id="3.30.230.10:FF:000002">
    <property type="entry name" value="30S ribosomal protein S5"/>
    <property type="match status" value="1"/>
</dbReference>
<dbReference type="Gene3D" id="3.30.160.20">
    <property type="match status" value="1"/>
</dbReference>
<dbReference type="Gene3D" id="3.30.230.10">
    <property type="match status" value="1"/>
</dbReference>
<dbReference type="HAMAP" id="MF_01307_B">
    <property type="entry name" value="Ribosomal_uS5_B"/>
    <property type="match status" value="1"/>
</dbReference>
<dbReference type="InterPro" id="IPR020568">
    <property type="entry name" value="Ribosomal_Su5_D2-typ_SF"/>
</dbReference>
<dbReference type="InterPro" id="IPR000851">
    <property type="entry name" value="Ribosomal_uS5"/>
</dbReference>
<dbReference type="InterPro" id="IPR005712">
    <property type="entry name" value="Ribosomal_uS5_bac-type"/>
</dbReference>
<dbReference type="InterPro" id="IPR005324">
    <property type="entry name" value="Ribosomal_uS5_C"/>
</dbReference>
<dbReference type="InterPro" id="IPR013810">
    <property type="entry name" value="Ribosomal_uS5_N"/>
</dbReference>
<dbReference type="InterPro" id="IPR018192">
    <property type="entry name" value="Ribosomal_uS5_N_CS"/>
</dbReference>
<dbReference type="InterPro" id="IPR014721">
    <property type="entry name" value="Ribsml_uS5_D2-typ_fold_subgr"/>
</dbReference>
<dbReference type="NCBIfam" id="TIGR01021">
    <property type="entry name" value="rpsE_bact"/>
    <property type="match status" value="1"/>
</dbReference>
<dbReference type="PANTHER" id="PTHR48277">
    <property type="entry name" value="MITOCHONDRIAL RIBOSOMAL PROTEIN S5"/>
    <property type="match status" value="1"/>
</dbReference>
<dbReference type="PANTHER" id="PTHR48277:SF1">
    <property type="entry name" value="MITOCHONDRIAL RIBOSOMAL PROTEIN S5"/>
    <property type="match status" value="1"/>
</dbReference>
<dbReference type="Pfam" id="PF00333">
    <property type="entry name" value="Ribosomal_S5"/>
    <property type="match status" value="1"/>
</dbReference>
<dbReference type="Pfam" id="PF03719">
    <property type="entry name" value="Ribosomal_S5_C"/>
    <property type="match status" value="1"/>
</dbReference>
<dbReference type="SUPFAM" id="SSF54768">
    <property type="entry name" value="dsRNA-binding domain-like"/>
    <property type="match status" value="1"/>
</dbReference>
<dbReference type="SUPFAM" id="SSF54211">
    <property type="entry name" value="Ribosomal protein S5 domain 2-like"/>
    <property type="match status" value="1"/>
</dbReference>
<dbReference type="PROSITE" id="PS00585">
    <property type="entry name" value="RIBOSOMAL_S5"/>
    <property type="match status" value="1"/>
</dbReference>
<dbReference type="PROSITE" id="PS50881">
    <property type="entry name" value="S5_DSRBD"/>
    <property type="match status" value="1"/>
</dbReference>
<gene>
    <name evidence="1" type="primary">rpsE</name>
    <name type="ordered locus">SH0819</name>
</gene>
<feature type="chain" id="PRO_0000230372" description="Small ribosomal subunit protein uS5">
    <location>
        <begin position="1"/>
        <end position="166"/>
    </location>
</feature>
<feature type="domain" description="S5 DRBM" evidence="1">
    <location>
        <begin position="11"/>
        <end position="74"/>
    </location>
</feature>